<name>DJC27_ORYSJ</name>
<sequence>MGIPVRSLLVASIVLSSIALHVAAAKNLDPYKVLGVDKSASQRDIQKAFHKLSLKYHPDKNKSKGAQEKFAEINNAYDILSDEEKRKNYDLYGDEKGNPGFGGGNFGNREGYTYFTGGGAKTSHFSSGDGWQTMGGQGNTKTFSFSFGGGNPGAGGGNPFNFDFGDVFSNIFSGGSMGGSQHTGSAGKARRGTKSSGHDSSSVNIQEVTMQIFNKETADQGITWLLLFYTPNTKGQFVLESVVEDVARSLDGALRAGKVNCDHEKALCKKAGVSIGKSARLFIYSYTTTEKGSLHEYSGDYDSKSLKTFCQEHLPRFSKRVDINQFSFPSNIIPNLPQVLLLSAKKDTPAMWRAVSGMFRSRLIFYDAEVQDVSHPLLKSLGVKNIPALIGRSVNGEEQLLKDGISVKDLRSGIKELKNLLENFEKKNKKLASNQAKKPAHTDQPKENKIPLLTASNFEEICGEKTSVCILGIFKSSKAKENLEAVLSEISQKTLIRGQNYNSGNAVAYALLDGNKQSAFLSTFDKSAFKSSDKLLLAYKPRRGRYAVYDNEVTMEEAERFVVSVLNGDVQLSAAGRKPVLR</sequence>
<comment type="function">
    <text evidence="10">May play a role in protein folding in the endoplasmic reticulum.</text>
</comment>
<comment type="subunit">
    <text evidence="6">Interacts with BIP5.</text>
</comment>
<comment type="subcellular location">
    <subcellularLocation>
        <location evidence="6">Endoplasmic reticulum</location>
    </subcellularLocation>
    <subcellularLocation>
        <location>Vacuole</location>
    </subcellularLocation>
    <text evidence="6">Localizes to the vacuole under ER stress.</text>
</comment>
<comment type="induction">
    <text evidence="5 6">By dithiothreitol- and tunicamycin-induced endoplasmic reticulum (ER) stress response (PubMed:24153418). Induced by heat shock (PubMed:23160806).</text>
</comment>
<comment type="sequence caution" evidence="9">
    <conflict type="erroneous gene model prediction">
        <sequence resource="EMBL-CDS" id="ABF95408"/>
    </conflict>
</comment>
<comment type="sequence caution" evidence="9">
    <conflict type="erroneous gene model prediction">
        <sequence resource="EMBL-CDS" id="ABF95409"/>
    </conflict>
</comment>
<comment type="sequence caution" evidence="9">
    <conflict type="erroneous gene model prediction">
        <sequence resource="EMBL-CDS" id="BAF11722"/>
    </conflict>
</comment>
<comment type="sequence caution" evidence="9">
    <conflict type="erroneous gene model prediction">
        <sequence resource="EMBL-CDS" id="BAS83685"/>
    </conflict>
</comment>
<proteinExistence type="evidence at protein level"/>
<dbReference type="EMBL" id="DP000009">
    <property type="protein sequence ID" value="ABF95408.1"/>
    <property type="status" value="ALT_SEQ"/>
    <property type="molecule type" value="Genomic_DNA"/>
</dbReference>
<dbReference type="EMBL" id="DP000009">
    <property type="protein sequence ID" value="ABF95409.1"/>
    <property type="status" value="ALT_SEQ"/>
    <property type="molecule type" value="Genomic_DNA"/>
</dbReference>
<dbReference type="EMBL" id="AP008209">
    <property type="protein sequence ID" value="BAF11722.1"/>
    <property type="status" value="ALT_SEQ"/>
    <property type="molecule type" value="Genomic_DNA"/>
</dbReference>
<dbReference type="EMBL" id="AP014959">
    <property type="protein sequence ID" value="BAS83685.1"/>
    <property type="status" value="ALT_SEQ"/>
    <property type="molecule type" value="Genomic_DNA"/>
</dbReference>
<dbReference type="EMBL" id="AK063376">
    <property type="protein sequence ID" value="BAG88671.1"/>
    <property type="molecule type" value="mRNA"/>
</dbReference>
<dbReference type="RefSeq" id="XP_015632727.1">
    <property type="nucleotide sequence ID" value="XM_015777241.1"/>
</dbReference>
<dbReference type="SMR" id="Q10MW6"/>
<dbReference type="FunCoup" id="Q10MW6">
    <property type="interactions" value="7"/>
</dbReference>
<dbReference type="STRING" id="39947.Q10MW6"/>
<dbReference type="GlyCosmos" id="Q10MW6">
    <property type="glycosylation" value="1 site, No reported glycans"/>
</dbReference>
<dbReference type="PaxDb" id="39947-Q10MW6"/>
<dbReference type="KEGG" id="dosa:Os03g0293000"/>
<dbReference type="eggNOG" id="KOG0714">
    <property type="taxonomic scope" value="Eukaryota"/>
</dbReference>
<dbReference type="HOGENOM" id="CLU_035865_0_0_1"/>
<dbReference type="InParanoid" id="Q10MW6"/>
<dbReference type="OrthoDB" id="10250354at2759"/>
<dbReference type="Proteomes" id="UP000000763">
    <property type="component" value="Chromosome 3"/>
</dbReference>
<dbReference type="Proteomes" id="UP000059680">
    <property type="component" value="Chromosome 3"/>
</dbReference>
<dbReference type="GO" id="GO:0005783">
    <property type="term" value="C:endoplasmic reticulum"/>
    <property type="evidence" value="ECO:0000314"/>
    <property type="project" value="UniProtKB"/>
</dbReference>
<dbReference type="GO" id="GO:0005773">
    <property type="term" value="C:vacuole"/>
    <property type="evidence" value="ECO:0000314"/>
    <property type="project" value="UniProtKB"/>
</dbReference>
<dbReference type="CDD" id="cd06257">
    <property type="entry name" value="DnaJ"/>
    <property type="match status" value="1"/>
</dbReference>
<dbReference type="FunFam" id="3.40.30.10:FF:000291">
    <property type="entry name" value="DnaJ protein ERDJ3A"/>
    <property type="match status" value="1"/>
</dbReference>
<dbReference type="FunFam" id="1.10.287.110:FF:000045">
    <property type="entry name" value="Molecular chaperone DnaJ"/>
    <property type="match status" value="1"/>
</dbReference>
<dbReference type="Gene3D" id="1.10.287.110">
    <property type="entry name" value="DnaJ domain"/>
    <property type="match status" value="1"/>
</dbReference>
<dbReference type="Gene3D" id="3.40.30.10">
    <property type="entry name" value="Glutaredoxin"/>
    <property type="match status" value="1"/>
</dbReference>
<dbReference type="InterPro" id="IPR001623">
    <property type="entry name" value="DnaJ_domain"/>
</dbReference>
<dbReference type="InterPro" id="IPR018253">
    <property type="entry name" value="DnaJ_domain_CS"/>
</dbReference>
<dbReference type="InterPro" id="IPR052842">
    <property type="entry name" value="ER_Co-chaperone"/>
</dbReference>
<dbReference type="InterPro" id="IPR036869">
    <property type="entry name" value="J_dom_sf"/>
</dbReference>
<dbReference type="InterPro" id="IPR036249">
    <property type="entry name" value="Thioredoxin-like_sf"/>
</dbReference>
<dbReference type="PANTHER" id="PTHR45184">
    <property type="entry name" value="DNAJ PROTEIN ERDJ3A"/>
    <property type="match status" value="1"/>
</dbReference>
<dbReference type="PANTHER" id="PTHR45184:SF1">
    <property type="entry name" value="DNAJ PROTEIN ERDJ3A"/>
    <property type="match status" value="1"/>
</dbReference>
<dbReference type="Pfam" id="PF00226">
    <property type="entry name" value="DnaJ"/>
    <property type="match status" value="1"/>
</dbReference>
<dbReference type="PRINTS" id="PR00625">
    <property type="entry name" value="JDOMAIN"/>
</dbReference>
<dbReference type="SMART" id="SM00271">
    <property type="entry name" value="DnaJ"/>
    <property type="match status" value="1"/>
</dbReference>
<dbReference type="SUPFAM" id="SSF46565">
    <property type="entry name" value="Chaperone J-domain"/>
    <property type="match status" value="1"/>
</dbReference>
<dbReference type="SUPFAM" id="SSF52833">
    <property type="entry name" value="Thioredoxin-like"/>
    <property type="match status" value="1"/>
</dbReference>
<dbReference type="PROSITE" id="PS00636">
    <property type="entry name" value="DNAJ_1"/>
    <property type="match status" value="1"/>
</dbReference>
<dbReference type="PROSITE" id="PS50076">
    <property type="entry name" value="DNAJ_2"/>
    <property type="match status" value="1"/>
</dbReference>
<protein>
    <recommendedName>
        <fullName evidence="9">DnaJ protein ERDJ3A</fullName>
    </recommendedName>
    <alternativeName>
        <fullName evidence="9">Chaperone protein dnaJ C27</fullName>
        <shortName evidence="7">OsDjC27</shortName>
    </alternativeName>
    <alternativeName>
        <fullName evidence="9">Endoplasmic reticulum dnaJ domain-containing protein 3A</fullName>
        <shortName evidence="8">OsERdj3A</shortName>
    </alternativeName>
</protein>
<accession>Q10MW6</accession>
<accession>A0A0P0VWC9</accession>
<accession>Q10MW5</accession>
<evidence type="ECO:0000255" key="1"/>
<evidence type="ECO:0000255" key="2">
    <source>
        <dbReference type="PROSITE-ProRule" id="PRU00286"/>
    </source>
</evidence>
<evidence type="ECO:0000255" key="3">
    <source>
        <dbReference type="PROSITE-ProRule" id="PRU00498"/>
    </source>
</evidence>
<evidence type="ECO:0000256" key="4">
    <source>
        <dbReference type="SAM" id="MobiDB-lite"/>
    </source>
</evidence>
<evidence type="ECO:0000269" key="5">
    <source>
    </source>
</evidence>
<evidence type="ECO:0000269" key="6">
    <source>
    </source>
</evidence>
<evidence type="ECO:0000303" key="7">
    <source>
    </source>
</evidence>
<evidence type="ECO:0000303" key="8">
    <source>
    </source>
</evidence>
<evidence type="ECO:0000305" key="9"/>
<evidence type="ECO:0000305" key="10">
    <source>
    </source>
</evidence>
<evidence type="ECO:0000312" key="11">
    <source>
        <dbReference type="EMBL" id="ABF95409.1"/>
    </source>
</evidence>
<evidence type="ECO:0000312" key="12">
    <source>
        <dbReference type="EMBL" id="BAS83685.1"/>
    </source>
</evidence>
<gene>
    <name evidence="8" type="primary">ERDJ3A</name>
    <name evidence="9" type="synonym">DJC27</name>
    <name evidence="12" type="ordered locus">Os03g0293000</name>
    <name evidence="11" type="ordered locus">LOC_Os03g18200</name>
</gene>
<feature type="signal peptide" evidence="1">
    <location>
        <begin position="1"/>
        <end position="25"/>
    </location>
</feature>
<feature type="chain" id="PRO_5004179725" description="DnaJ protein ERDJ3A">
    <location>
        <begin position="26"/>
        <end position="582"/>
    </location>
</feature>
<feature type="domain" description="J" evidence="2">
    <location>
        <begin position="29"/>
        <end position="93"/>
    </location>
</feature>
<feature type="region of interest" description="Disordered" evidence="4">
    <location>
        <begin position="178"/>
        <end position="201"/>
    </location>
</feature>
<feature type="coiled-coil region" evidence="1">
    <location>
        <begin position="407"/>
        <end position="437"/>
    </location>
</feature>
<feature type="glycosylation site" description="N-linked (GlcNAc...) asparagine" evidence="3">
    <location>
        <position position="61"/>
    </location>
</feature>
<keyword id="KW-0143">Chaperone</keyword>
<keyword id="KW-0175">Coiled coil</keyword>
<keyword id="KW-0256">Endoplasmic reticulum</keyword>
<keyword id="KW-0325">Glycoprotein</keyword>
<keyword id="KW-1185">Reference proteome</keyword>
<keyword id="KW-0732">Signal</keyword>
<keyword id="KW-0926">Vacuole</keyword>
<reference key="1">
    <citation type="journal article" date="2005" name="Genome Res.">
        <title>Sequence, annotation, and analysis of synteny between rice chromosome 3 and diverged grass species.</title>
        <authorList>
            <consortium name="The rice chromosome 3 sequencing consortium"/>
            <person name="Buell C.R."/>
            <person name="Yuan Q."/>
            <person name="Ouyang S."/>
            <person name="Liu J."/>
            <person name="Zhu W."/>
            <person name="Wang A."/>
            <person name="Maiti R."/>
            <person name="Haas B."/>
            <person name="Wortman J."/>
            <person name="Pertea M."/>
            <person name="Jones K.M."/>
            <person name="Kim M."/>
            <person name="Overton L."/>
            <person name="Tsitrin T."/>
            <person name="Fadrosh D."/>
            <person name="Bera J."/>
            <person name="Weaver B."/>
            <person name="Jin S."/>
            <person name="Johri S."/>
            <person name="Reardon M."/>
            <person name="Webb K."/>
            <person name="Hill J."/>
            <person name="Moffat K."/>
            <person name="Tallon L."/>
            <person name="Van Aken S."/>
            <person name="Lewis M."/>
            <person name="Utterback T."/>
            <person name="Feldblyum T."/>
            <person name="Zismann V."/>
            <person name="Iobst S."/>
            <person name="Hsiao J."/>
            <person name="de Vazeille A.R."/>
            <person name="Salzberg S.L."/>
            <person name="White O."/>
            <person name="Fraser C.M."/>
            <person name="Yu Y."/>
            <person name="Kim H."/>
            <person name="Rambo T."/>
            <person name="Currie J."/>
            <person name="Collura K."/>
            <person name="Kernodle-Thompson S."/>
            <person name="Wei F."/>
            <person name="Kudrna K."/>
            <person name="Ammiraju J.S.S."/>
            <person name="Luo M."/>
            <person name="Goicoechea J.L."/>
            <person name="Wing R.A."/>
            <person name="Henry D."/>
            <person name="Oates R."/>
            <person name="Palmer M."/>
            <person name="Pries G."/>
            <person name="Saski C."/>
            <person name="Simmons J."/>
            <person name="Soderlund C."/>
            <person name="Nelson W."/>
            <person name="de la Bastide M."/>
            <person name="Spiegel L."/>
            <person name="Nascimento L."/>
            <person name="Huang E."/>
            <person name="Preston R."/>
            <person name="Zutavern T."/>
            <person name="Palmer L."/>
            <person name="O'Shaughnessy A."/>
            <person name="Dike S."/>
            <person name="McCombie W.R."/>
            <person name="Minx P."/>
            <person name="Cordum H."/>
            <person name="Wilson R."/>
            <person name="Jin W."/>
            <person name="Lee H.R."/>
            <person name="Jiang J."/>
            <person name="Jackson S."/>
        </authorList>
    </citation>
    <scope>NUCLEOTIDE SEQUENCE [LARGE SCALE GENOMIC DNA]</scope>
    <source>
        <strain>cv. Nipponbare</strain>
    </source>
</reference>
<reference key="2">
    <citation type="journal article" date="2005" name="Nature">
        <title>The map-based sequence of the rice genome.</title>
        <authorList>
            <consortium name="International rice genome sequencing project (IRGSP)"/>
        </authorList>
    </citation>
    <scope>NUCLEOTIDE SEQUENCE [LARGE SCALE GENOMIC DNA]</scope>
    <source>
        <strain>cv. Nipponbare</strain>
    </source>
</reference>
<reference key="3">
    <citation type="journal article" date="2008" name="Nucleic Acids Res.">
        <title>The rice annotation project database (RAP-DB): 2008 update.</title>
        <authorList>
            <consortium name="The rice annotation project (RAP)"/>
        </authorList>
    </citation>
    <scope>GENOME REANNOTATION</scope>
    <source>
        <strain>cv. Nipponbare</strain>
    </source>
</reference>
<reference key="4">
    <citation type="journal article" date="2013" name="Rice">
        <title>Improvement of the Oryza sativa Nipponbare reference genome using next generation sequence and optical map data.</title>
        <authorList>
            <person name="Kawahara Y."/>
            <person name="de la Bastide M."/>
            <person name="Hamilton J.P."/>
            <person name="Kanamori H."/>
            <person name="McCombie W.R."/>
            <person name="Ouyang S."/>
            <person name="Schwartz D.C."/>
            <person name="Tanaka T."/>
            <person name="Wu J."/>
            <person name="Zhou S."/>
            <person name="Childs K.L."/>
            <person name="Davidson R.M."/>
            <person name="Lin H."/>
            <person name="Quesada-Ocampo L."/>
            <person name="Vaillancourt B."/>
            <person name="Sakai H."/>
            <person name="Lee S.S."/>
            <person name="Kim J."/>
            <person name="Numa H."/>
            <person name="Itoh T."/>
            <person name="Buell C.R."/>
            <person name="Matsumoto T."/>
        </authorList>
    </citation>
    <scope>GENOME REANNOTATION</scope>
    <source>
        <strain>cv. Nipponbare</strain>
    </source>
</reference>
<reference key="5">
    <citation type="journal article" date="2003" name="Science">
        <title>Collection, mapping, and annotation of over 28,000 cDNA clones from japonica rice.</title>
        <authorList>
            <consortium name="The rice full-length cDNA consortium"/>
        </authorList>
    </citation>
    <scope>NUCLEOTIDE SEQUENCE [LARGE SCALE MRNA] OF 87-582</scope>
    <source>
        <strain>cv. Nipponbare</strain>
    </source>
</reference>
<reference key="6">
    <citation type="journal article" date="2013" name="Cell Stress Chaperones">
        <title>Functional relevance of J-protein family of rice (Oryza sativa).</title>
        <authorList>
            <person name="Sarkar N.K."/>
            <person name="Thapar U."/>
            <person name="Kundnani P."/>
            <person name="Panwar P."/>
            <person name="Grover A."/>
        </authorList>
    </citation>
    <scope>GENE FAMILY</scope>
    <scope>NOMENCLATURE</scope>
    <scope>INDUCTION BY HEAT SHOCK</scope>
</reference>
<reference key="7">
    <citation type="journal article" date="2013" name="J. Exp. Bot.">
        <title>Analysis of rice ER-resident J-proteins reveals diversity and functional differentiation of the ER-resident Hsp70 system in plants.</title>
        <authorList>
            <person name="Ohta M."/>
            <person name="Wakasa Y."/>
            <person name="Takahashi H."/>
            <person name="Hayashi S."/>
            <person name="Kudo K."/>
            <person name="Takaiwa F."/>
        </authorList>
    </citation>
    <scope>FUNCTION</scope>
    <scope>INTERACTION WITH BIP5</scope>
    <scope>SUBCELLULAR LOCATION</scope>
    <scope>INDUCTION</scope>
</reference>
<organism>
    <name type="scientific">Oryza sativa subsp. japonica</name>
    <name type="common">Rice</name>
    <dbReference type="NCBI Taxonomy" id="39947"/>
    <lineage>
        <taxon>Eukaryota</taxon>
        <taxon>Viridiplantae</taxon>
        <taxon>Streptophyta</taxon>
        <taxon>Embryophyta</taxon>
        <taxon>Tracheophyta</taxon>
        <taxon>Spermatophyta</taxon>
        <taxon>Magnoliopsida</taxon>
        <taxon>Liliopsida</taxon>
        <taxon>Poales</taxon>
        <taxon>Poaceae</taxon>
        <taxon>BOP clade</taxon>
        <taxon>Oryzoideae</taxon>
        <taxon>Oryzeae</taxon>
        <taxon>Oryzinae</taxon>
        <taxon>Oryza</taxon>
        <taxon>Oryza sativa</taxon>
    </lineage>
</organism>